<comment type="function">
    <text evidence="1">Involved in DNA recombination.</text>
</comment>
<comment type="similarity">
    <text evidence="4">Belongs to the RmuC family.</text>
</comment>
<protein>
    <recommendedName>
        <fullName>DNA recombination protein RmuC</fullName>
    </recommendedName>
</protein>
<proteinExistence type="inferred from homology"/>
<dbReference type="EMBL" id="AF233324">
    <property type="protein sequence ID" value="AAF33423.1"/>
    <property type="molecule type" value="Genomic_DNA"/>
</dbReference>
<dbReference type="EMBL" id="AE006468">
    <property type="protein sequence ID" value="AAL22813.1"/>
    <property type="molecule type" value="Genomic_DNA"/>
</dbReference>
<dbReference type="RefSeq" id="WP_000355562.1">
    <property type="nucleotide sequence ID" value="NC_003197.2"/>
</dbReference>
<dbReference type="SMR" id="P0A2B7"/>
<dbReference type="STRING" id="99287.STM3969"/>
<dbReference type="PaxDb" id="99287-STM3969"/>
<dbReference type="KEGG" id="stm:STM3969"/>
<dbReference type="PATRIC" id="fig|99287.12.peg.4188"/>
<dbReference type="HOGENOM" id="CLU_024057_0_1_6"/>
<dbReference type="OMA" id="GDSKMQG"/>
<dbReference type="PhylomeDB" id="P0A2B7"/>
<dbReference type="BioCyc" id="SENT99287:STM3969-MONOMER"/>
<dbReference type="Proteomes" id="UP000001014">
    <property type="component" value="Chromosome"/>
</dbReference>
<dbReference type="GO" id="GO:0006310">
    <property type="term" value="P:DNA recombination"/>
    <property type="evidence" value="ECO:0000318"/>
    <property type="project" value="GO_Central"/>
</dbReference>
<dbReference type="InterPro" id="IPR003798">
    <property type="entry name" value="DNA_recombination_RmuC"/>
</dbReference>
<dbReference type="NCBIfam" id="NF007686">
    <property type="entry name" value="PRK10361.1"/>
    <property type="match status" value="1"/>
</dbReference>
<dbReference type="PANTHER" id="PTHR30563">
    <property type="entry name" value="DNA RECOMBINATION PROTEIN RMUC"/>
    <property type="match status" value="1"/>
</dbReference>
<dbReference type="PANTHER" id="PTHR30563:SF0">
    <property type="entry name" value="DNA RECOMBINATION PROTEIN RMUC"/>
    <property type="match status" value="1"/>
</dbReference>
<dbReference type="Pfam" id="PF02646">
    <property type="entry name" value="RmuC"/>
    <property type="match status" value="1"/>
</dbReference>
<accession>P0A2B7</accession>
<accession>Q9L6M7</accession>
<reference key="1">
    <citation type="journal article" date="2001" name="Nature">
        <title>Complete genome sequence of Salmonella enterica serovar Typhimurium LT2.</title>
        <authorList>
            <person name="McClelland M."/>
            <person name="Sanderson K.E."/>
            <person name="Spieth J."/>
            <person name="Clifton S.W."/>
            <person name="Latreille P."/>
            <person name="Courtney L."/>
            <person name="Porwollik S."/>
            <person name="Ali J."/>
            <person name="Dante M."/>
            <person name="Du F."/>
            <person name="Hou S."/>
            <person name="Layman D."/>
            <person name="Leonard S."/>
            <person name="Nguyen C."/>
            <person name="Scott K."/>
            <person name="Holmes A."/>
            <person name="Grewal N."/>
            <person name="Mulvaney E."/>
            <person name="Ryan E."/>
            <person name="Sun H."/>
            <person name="Florea L."/>
            <person name="Miller W."/>
            <person name="Stoneking T."/>
            <person name="Nhan M."/>
            <person name="Waterston R."/>
            <person name="Wilson R.K."/>
        </authorList>
    </citation>
    <scope>NUCLEOTIDE SEQUENCE [LARGE SCALE GENOMIC DNA]</scope>
    <source>
        <strain>LT2 / SGSC1412 / ATCC 700720</strain>
    </source>
</reference>
<evidence type="ECO:0000250" key="1"/>
<evidence type="ECO:0000255" key="2"/>
<evidence type="ECO:0000256" key="3">
    <source>
        <dbReference type="SAM" id="MobiDB-lite"/>
    </source>
</evidence>
<evidence type="ECO:0000305" key="4"/>
<feature type="chain" id="PRO_0000202039" description="DNA recombination protein RmuC">
    <location>
        <begin position="1"/>
        <end position="476"/>
    </location>
</feature>
<feature type="region of interest" description="Disordered" evidence="3">
    <location>
        <begin position="447"/>
        <end position="476"/>
    </location>
</feature>
<feature type="coiled-coil region" evidence="2">
    <location>
        <begin position="25"/>
        <end position="202"/>
    </location>
</feature>
<feature type="compositionally biased region" description="Basic and acidic residues" evidence="3">
    <location>
        <begin position="449"/>
        <end position="476"/>
    </location>
</feature>
<gene>
    <name type="primary">rmuC</name>
    <name type="ordered locus">STM3969</name>
    <name type="ORF">STMD1.20</name>
</gene>
<organism>
    <name type="scientific">Salmonella typhimurium (strain LT2 / SGSC1412 / ATCC 700720)</name>
    <dbReference type="NCBI Taxonomy" id="99287"/>
    <lineage>
        <taxon>Bacteria</taxon>
        <taxon>Pseudomonadati</taxon>
        <taxon>Pseudomonadota</taxon>
        <taxon>Gammaproteobacteria</taxon>
        <taxon>Enterobacterales</taxon>
        <taxon>Enterobacteriaceae</taxon>
        <taxon>Salmonella</taxon>
    </lineage>
</organism>
<sequence>MDITLMISAVVALAAGAVIGWLATKAHADQIRADLIEERRELDIELSAARQQLAQEAHWRSECELLNNELRSLHSINTSLEADLREVTTRLEATQQHAEDKIRQMINSEQRLSEQFENLANRIFEHSNRRVDEQNRQSLNSLLTPLREQLDGFRRQVQESFGKEAQERHTLAHEIRNLQQLNAQMAQEAINLTRALKGDNKAQGNWGEVVLARVLEASGLREGYEYETQVSIENDARSRMQPDVIVRLPQGKDVVIDAKMTLVAYERYFNAEDDYTREAALQEHIASVRNHIRLLGRKDYQQLPGLRSLDYVLMFIPVEPAFLLALDKQPELITEALKNNIMLVSPTTLLVALRTIANLWRYEHQSRNAQHIADRASKLYDKMRLFVDDMSAIGQSLDKAQDNYRQAMKKLASGRGNVLAQAEAFRGLGVEIKREINPDLAEQAVTQDEEYRLRSIPEGRQDEHYPNDERVKQQLS</sequence>
<keyword id="KW-0175">Coiled coil</keyword>
<keyword id="KW-0233">DNA recombination</keyword>
<keyword id="KW-1185">Reference proteome</keyword>
<name>RMUC_SALTY</name>